<evidence type="ECO:0000250" key="1"/>
<evidence type="ECO:0000255" key="2"/>
<evidence type="ECO:0000305" key="3"/>
<keyword id="KW-0202">Cytokine</keyword>
<keyword id="KW-0325">Glycoprotein</keyword>
<keyword id="KW-0339">Growth factor</keyword>
<keyword id="KW-1185">Reference proteome</keyword>
<keyword id="KW-0964">Secreted</keyword>
<keyword id="KW-0732">Signal</keyword>
<feature type="signal peptide" evidence="2">
    <location>
        <begin position="1"/>
        <end position="23"/>
    </location>
</feature>
<feature type="chain" id="PRO_0000015515" description="Interleukin-3">
    <location>
        <begin position="24"/>
        <end position="143"/>
    </location>
</feature>
<feature type="glycosylation site" description="N-linked (GlcNAc...) asparagine" evidence="2">
    <location>
        <position position="79"/>
    </location>
</feature>
<protein>
    <recommendedName>
        <fullName>Interleukin-3</fullName>
        <shortName>IL-3</shortName>
    </recommendedName>
    <alternativeName>
        <fullName>Hematopoietic growth factor</fullName>
    </alternativeName>
    <alternativeName>
        <fullName>Mast cell growth factor</fullName>
        <shortName>MCGF</shortName>
    </alternativeName>
    <alternativeName>
        <fullName>Multipotential colony-stimulating factor</fullName>
    </alternativeName>
    <alternativeName>
        <fullName>P-cell-stimulating factor</fullName>
    </alternativeName>
</protein>
<gene>
    <name type="primary">IL3</name>
</gene>
<sequence length="143" mass="16499">MSSFPILHLLLLLLGCQVPQAQGRPFSTDLPKQYFTMINEIMEMLNKSPSPSEEPLDSNEKETLLEDTLLRPNLDVFLNASSKFHKNGLLIWNNLKEFLPLLPTPTPRGEPISIMENNWGDFQRKLKKYLEALDNFLNFKNKP</sequence>
<comment type="function">
    <text evidence="1">Granulocyte/macrophage colony-stimulating factors are cytokines that act in hematopoiesis by controlling the production, differentiation, and function of 2 related white cell populations of the blood, the granulocytes and the monocytes-macrophages.</text>
</comment>
<comment type="function">
    <text evidence="1">This CSF induces granulocytes, macrophages, mast cells, stem cells, erythroid cells, eosinophils and megakaryocytes.</text>
</comment>
<comment type="subunit">
    <text evidence="1">Monomer.</text>
</comment>
<comment type="subcellular location">
    <subcellularLocation>
        <location>Secreted</location>
    </subcellularLocation>
</comment>
<comment type="similarity">
    <text evidence="3">Belongs to the IL-3 family.</text>
</comment>
<dbReference type="EMBL" id="AF250764">
    <property type="protein sequence ID" value="AAK37958.1"/>
    <property type="molecule type" value="Genomic_DNA"/>
</dbReference>
<dbReference type="RefSeq" id="NP_001013857.1">
    <property type="nucleotide sequence ID" value="NM_001013835.1"/>
</dbReference>
<dbReference type="RefSeq" id="XP_013973137.1">
    <property type="nucleotide sequence ID" value="XM_014117662.1"/>
</dbReference>
<dbReference type="SMR" id="Q9BDX4"/>
<dbReference type="FunCoup" id="Q9BDX4">
    <property type="interactions" value="101"/>
</dbReference>
<dbReference type="STRING" id="9615.ENSCAFP00000001172"/>
<dbReference type="GlyCosmos" id="Q9BDX4">
    <property type="glycosylation" value="1 site, No reported glycans"/>
</dbReference>
<dbReference type="PaxDb" id="9612-ENSCAFP00000001172"/>
<dbReference type="Ensembl" id="ENSCAFT00000001280.4">
    <property type="protein sequence ID" value="ENSCAFP00000001172.3"/>
    <property type="gene ID" value="ENSCAFG00000000817.4"/>
</dbReference>
<dbReference type="Ensembl" id="ENSCAFT00030023305.1">
    <property type="protein sequence ID" value="ENSCAFP00030020320.1"/>
    <property type="gene ID" value="ENSCAFG00030012590.1"/>
</dbReference>
<dbReference type="Ensembl" id="ENSCAFT00040029585.1">
    <property type="protein sequence ID" value="ENSCAFP00040025703.1"/>
    <property type="gene ID" value="ENSCAFG00040016064.1"/>
</dbReference>
<dbReference type="GeneID" id="481497"/>
<dbReference type="KEGG" id="cfa:481497"/>
<dbReference type="CTD" id="3562"/>
<dbReference type="VGNC" id="VGNC:53502">
    <property type="gene designation" value="IL3"/>
</dbReference>
<dbReference type="eggNOG" id="ENOG502TD4X">
    <property type="taxonomic scope" value="Eukaryota"/>
</dbReference>
<dbReference type="HOGENOM" id="CLU_144877_0_0_1"/>
<dbReference type="InParanoid" id="Q9BDX4"/>
<dbReference type="OMA" id="IKDGDWN"/>
<dbReference type="OrthoDB" id="22928at33554"/>
<dbReference type="TreeFam" id="TF338567"/>
<dbReference type="Reactome" id="R-CFA-512988">
    <property type="pathway name" value="Interleukin-3, Interleukin-5 and GM-CSF signaling"/>
</dbReference>
<dbReference type="Reactome" id="R-CFA-5673001">
    <property type="pathway name" value="RAF/MAP kinase cascade"/>
</dbReference>
<dbReference type="Reactome" id="R-CFA-912526">
    <property type="pathway name" value="Interleukin receptor SHC signaling"/>
</dbReference>
<dbReference type="Proteomes" id="UP000002254">
    <property type="component" value="Chromosome 11"/>
</dbReference>
<dbReference type="Proteomes" id="UP000694429">
    <property type="component" value="Chromosome 11"/>
</dbReference>
<dbReference type="Proteomes" id="UP000694542">
    <property type="component" value="Chromosome 11"/>
</dbReference>
<dbReference type="Proteomes" id="UP000805418">
    <property type="component" value="Unplaced"/>
</dbReference>
<dbReference type="Bgee" id="ENSCAFG00000000817">
    <property type="expression patterns" value="Expressed in occipital cortex and 1 other cell type or tissue"/>
</dbReference>
<dbReference type="GO" id="GO:0005615">
    <property type="term" value="C:extracellular space"/>
    <property type="evidence" value="ECO:0000250"/>
    <property type="project" value="UniProtKB"/>
</dbReference>
<dbReference type="GO" id="GO:0005125">
    <property type="term" value="F:cytokine activity"/>
    <property type="evidence" value="ECO:0000250"/>
    <property type="project" value="UniProtKB"/>
</dbReference>
<dbReference type="GO" id="GO:0008083">
    <property type="term" value="F:growth factor activity"/>
    <property type="evidence" value="ECO:0007669"/>
    <property type="project" value="UniProtKB-KW"/>
</dbReference>
<dbReference type="GO" id="GO:0005135">
    <property type="term" value="F:interleukin-3 receptor binding"/>
    <property type="evidence" value="ECO:0007669"/>
    <property type="project" value="InterPro"/>
</dbReference>
<dbReference type="GO" id="GO:0006955">
    <property type="term" value="P:immune response"/>
    <property type="evidence" value="ECO:0007669"/>
    <property type="project" value="InterPro"/>
</dbReference>
<dbReference type="GO" id="GO:0038156">
    <property type="term" value="P:interleukin-3-mediated signaling pathway"/>
    <property type="evidence" value="ECO:0000318"/>
    <property type="project" value="GO_Central"/>
</dbReference>
<dbReference type="GO" id="GO:0008284">
    <property type="term" value="P:positive regulation of cell population proliferation"/>
    <property type="evidence" value="ECO:0000250"/>
    <property type="project" value="UniProtKB"/>
</dbReference>
<dbReference type="FunFam" id="1.20.1250.10:FF:000067">
    <property type="entry name" value="Interleukin-3"/>
    <property type="match status" value="1"/>
</dbReference>
<dbReference type="Gene3D" id="1.20.1250.10">
    <property type="match status" value="1"/>
</dbReference>
<dbReference type="InterPro" id="IPR009079">
    <property type="entry name" value="4_helix_cytokine-like_core"/>
</dbReference>
<dbReference type="InterPro" id="IPR002183">
    <property type="entry name" value="IL-3"/>
</dbReference>
<dbReference type="PANTHER" id="PTHR48489">
    <property type="entry name" value="INTERLEUKIN-3"/>
    <property type="match status" value="1"/>
</dbReference>
<dbReference type="PANTHER" id="PTHR48489:SF1">
    <property type="entry name" value="INTERLEUKIN-3"/>
    <property type="match status" value="1"/>
</dbReference>
<dbReference type="Pfam" id="PF02059">
    <property type="entry name" value="IL3"/>
    <property type="match status" value="1"/>
</dbReference>
<dbReference type="PIRSF" id="PIRSF001939">
    <property type="entry name" value="IL-3"/>
    <property type="match status" value="1"/>
</dbReference>
<dbReference type="PRINTS" id="PR00430">
    <property type="entry name" value="INTERLEUKIN3"/>
</dbReference>
<dbReference type="SUPFAM" id="SSF47266">
    <property type="entry name" value="4-helical cytokines"/>
    <property type="match status" value="1"/>
</dbReference>
<reference key="1">
    <citation type="submission" date="2000-03" db="EMBL/GenBank/DDBJ databases">
        <title>The cloning and expression of the gene for canine interleukin-3.</title>
        <authorList>
            <person name="McSweeney P.A."/>
            <person name="Gass M.J."/>
            <person name="Brunvand M.W."/>
            <person name="Lioubin M.N."/>
            <person name="Nash R.A."/>
        </authorList>
    </citation>
    <scope>NUCLEOTIDE SEQUENCE [GENOMIC DNA]</scope>
</reference>
<proteinExistence type="inferred from homology"/>
<accession>Q9BDX4</accession>
<name>IL3_CANLF</name>
<organism>
    <name type="scientific">Canis lupus familiaris</name>
    <name type="common">Dog</name>
    <name type="synonym">Canis familiaris</name>
    <dbReference type="NCBI Taxonomy" id="9615"/>
    <lineage>
        <taxon>Eukaryota</taxon>
        <taxon>Metazoa</taxon>
        <taxon>Chordata</taxon>
        <taxon>Craniata</taxon>
        <taxon>Vertebrata</taxon>
        <taxon>Euteleostomi</taxon>
        <taxon>Mammalia</taxon>
        <taxon>Eutheria</taxon>
        <taxon>Laurasiatheria</taxon>
        <taxon>Carnivora</taxon>
        <taxon>Caniformia</taxon>
        <taxon>Canidae</taxon>
        <taxon>Canis</taxon>
    </lineage>
</organism>